<reference key="1">
    <citation type="journal article" date="2010" name="J. Bacteriol.">
        <title>Genome sequence of the dioxin-mineralizing bacterium Sphingomonas wittichii RW1.</title>
        <authorList>
            <person name="Miller T.R."/>
            <person name="Delcher A.L."/>
            <person name="Salzberg S.L."/>
            <person name="Saunders E."/>
            <person name="Detter J.C."/>
            <person name="Halden R.U."/>
        </authorList>
    </citation>
    <scope>NUCLEOTIDE SEQUENCE [LARGE SCALE GENOMIC DNA]</scope>
    <source>
        <strain>DSM 6014 / CCUG 31198 / JCM 15750 / NBRC 105917 / EY 4224 / RW1</strain>
    </source>
</reference>
<dbReference type="EC" id="2.1.1.74" evidence="1"/>
<dbReference type="EMBL" id="CP000699">
    <property type="protein sequence ID" value="ABQ67244.1"/>
    <property type="molecule type" value="Genomic_DNA"/>
</dbReference>
<dbReference type="SMR" id="A5V4M8"/>
<dbReference type="STRING" id="392499.Swit_0877"/>
<dbReference type="PaxDb" id="392499-Swit_0877"/>
<dbReference type="KEGG" id="swi:Swit_0877"/>
<dbReference type="eggNOG" id="COG1206">
    <property type="taxonomic scope" value="Bacteria"/>
</dbReference>
<dbReference type="HOGENOM" id="CLU_033057_1_0_5"/>
<dbReference type="OrthoDB" id="9803114at2"/>
<dbReference type="Proteomes" id="UP000001989">
    <property type="component" value="Chromosome"/>
</dbReference>
<dbReference type="GO" id="GO:0005829">
    <property type="term" value="C:cytosol"/>
    <property type="evidence" value="ECO:0007669"/>
    <property type="project" value="TreeGrafter"/>
</dbReference>
<dbReference type="GO" id="GO:0050660">
    <property type="term" value="F:flavin adenine dinucleotide binding"/>
    <property type="evidence" value="ECO:0007669"/>
    <property type="project" value="UniProtKB-UniRule"/>
</dbReference>
<dbReference type="GO" id="GO:0047151">
    <property type="term" value="F:tRNA (uracil(54)-C5)-methyltransferase activity, 5,10-methylenetetrahydrofolate-dependent"/>
    <property type="evidence" value="ECO:0007669"/>
    <property type="project" value="UniProtKB-UniRule"/>
</dbReference>
<dbReference type="GO" id="GO:0030488">
    <property type="term" value="P:tRNA methylation"/>
    <property type="evidence" value="ECO:0007669"/>
    <property type="project" value="TreeGrafter"/>
</dbReference>
<dbReference type="GO" id="GO:0002098">
    <property type="term" value="P:tRNA wobble uridine modification"/>
    <property type="evidence" value="ECO:0007669"/>
    <property type="project" value="TreeGrafter"/>
</dbReference>
<dbReference type="Gene3D" id="3.50.50.60">
    <property type="entry name" value="FAD/NAD(P)-binding domain"/>
    <property type="match status" value="2"/>
</dbReference>
<dbReference type="HAMAP" id="MF_01037">
    <property type="entry name" value="TrmFO"/>
    <property type="match status" value="1"/>
</dbReference>
<dbReference type="InterPro" id="IPR036188">
    <property type="entry name" value="FAD/NAD-bd_sf"/>
</dbReference>
<dbReference type="InterPro" id="IPR002218">
    <property type="entry name" value="MnmG-rel"/>
</dbReference>
<dbReference type="InterPro" id="IPR020595">
    <property type="entry name" value="MnmG-rel_CS"/>
</dbReference>
<dbReference type="InterPro" id="IPR040131">
    <property type="entry name" value="MnmG_N"/>
</dbReference>
<dbReference type="InterPro" id="IPR004417">
    <property type="entry name" value="TrmFO"/>
</dbReference>
<dbReference type="NCBIfam" id="TIGR00137">
    <property type="entry name" value="gid_trmFO"/>
    <property type="match status" value="1"/>
</dbReference>
<dbReference type="NCBIfam" id="NF003739">
    <property type="entry name" value="PRK05335.1"/>
    <property type="match status" value="1"/>
</dbReference>
<dbReference type="PANTHER" id="PTHR11806">
    <property type="entry name" value="GLUCOSE INHIBITED DIVISION PROTEIN A"/>
    <property type="match status" value="1"/>
</dbReference>
<dbReference type="PANTHER" id="PTHR11806:SF2">
    <property type="entry name" value="METHYLENETETRAHYDROFOLATE--TRNA-(URACIL-5-)-METHYLTRANSFERASE TRMFO"/>
    <property type="match status" value="1"/>
</dbReference>
<dbReference type="Pfam" id="PF01134">
    <property type="entry name" value="GIDA"/>
    <property type="match status" value="1"/>
</dbReference>
<dbReference type="SUPFAM" id="SSF51905">
    <property type="entry name" value="FAD/NAD(P)-binding domain"/>
    <property type="match status" value="1"/>
</dbReference>
<dbReference type="PROSITE" id="PS01281">
    <property type="entry name" value="GIDA_2"/>
    <property type="match status" value="1"/>
</dbReference>
<comment type="function">
    <text evidence="1">Catalyzes the folate-dependent formation of 5-methyl-uridine at position 54 (M-5-U54) in all tRNAs.</text>
</comment>
<comment type="catalytic activity">
    <reaction evidence="1">
        <text>uridine(54) in tRNA + (6R)-5,10-methylene-5,6,7,8-tetrahydrofolate + NADH + H(+) = 5-methyluridine(54) in tRNA + (6S)-5,6,7,8-tetrahydrofolate + NAD(+)</text>
        <dbReference type="Rhea" id="RHEA:16873"/>
        <dbReference type="Rhea" id="RHEA-COMP:10167"/>
        <dbReference type="Rhea" id="RHEA-COMP:10193"/>
        <dbReference type="ChEBI" id="CHEBI:15378"/>
        <dbReference type="ChEBI" id="CHEBI:15636"/>
        <dbReference type="ChEBI" id="CHEBI:57453"/>
        <dbReference type="ChEBI" id="CHEBI:57540"/>
        <dbReference type="ChEBI" id="CHEBI:57945"/>
        <dbReference type="ChEBI" id="CHEBI:65315"/>
        <dbReference type="ChEBI" id="CHEBI:74447"/>
        <dbReference type="EC" id="2.1.1.74"/>
    </reaction>
</comment>
<comment type="catalytic activity">
    <reaction evidence="1">
        <text>uridine(54) in tRNA + (6R)-5,10-methylene-5,6,7,8-tetrahydrofolate + NADPH + H(+) = 5-methyluridine(54) in tRNA + (6S)-5,6,7,8-tetrahydrofolate + NADP(+)</text>
        <dbReference type="Rhea" id="RHEA:62372"/>
        <dbReference type="Rhea" id="RHEA-COMP:10167"/>
        <dbReference type="Rhea" id="RHEA-COMP:10193"/>
        <dbReference type="ChEBI" id="CHEBI:15378"/>
        <dbReference type="ChEBI" id="CHEBI:15636"/>
        <dbReference type="ChEBI" id="CHEBI:57453"/>
        <dbReference type="ChEBI" id="CHEBI:57783"/>
        <dbReference type="ChEBI" id="CHEBI:58349"/>
        <dbReference type="ChEBI" id="CHEBI:65315"/>
        <dbReference type="ChEBI" id="CHEBI:74447"/>
        <dbReference type="EC" id="2.1.1.74"/>
    </reaction>
</comment>
<comment type="cofactor">
    <cofactor evidence="1">
        <name>FAD</name>
        <dbReference type="ChEBI" id="CHEBI:57692"/>
    </cofactor>
</comment>
<comment type="subcellular location">
    <subcellularLocation>
        <location evidence="1">Cytoplasm</location>
    </subcellularLocation>
</comment>
<comment type="similarity">
    <text evidence="1">Belongs to the MnmG family. TrmFO subfamily.</text>
</comment>
<protein>
    <recommendedName>
        <fullName evidence="1">Methylenetetrahydrofolate--tRNA-(uracil-5-)-methyltransferase TrmFO</fullName>
        <ecNumber evidence="1">2.1.1.74</ecNumber>
    </recommendedName>
    <alternativeName>
        <fullName evidence="1">Folate-dependent tRNA (uracil-5-)-methyltransferase</fullName>
    </alternativeName>
    <alternativeName>
        <fullName evidence="1">Folate-dependent tRNA(M-5-U54)-methyltransferase</fullName>
    </alternativeName>
</protein>
<keyword id="KW-0963">Cytoplasm</keyword>
<keyword id="KW-0274">FAD</keyword>
<keyword id="KW-0285">Flavoprotein</keyword>
<keyword id="KW-0489">Methyltransferase</keyword>
<keyword id="KW-0520">NAD</keyword>
<keyword id="KW-0521">NADP</keyword>
<keyword id="KW-1185">Reference proteome</keyword>
<keyword id="KW-0808">Transferase</keyword>
<keyword id="KW-0819">tRNA processing</keyword>
<accession>A5V4M8</accession>
<gene>
    <name evidence="1" type="primary">trmFO</name>
    <name type="synonym">gid</name>
    <name type="ordered locus">Swit_0877</name>
</gene>
<evidence type="ECO:0000255" key="1">
    <source>
        <dbReference type="HAMAP-Rule" id="MF_01037"/>
    </source>
</evidence>
<feature type="chain" id="PRO_1000063929" description="Methylenetetrahydrofolate--tRNA-(uracil-5-)-methyltransferase TrmFO">
    <location>
        <begin position="1"/>
        <end position="445"/>
    </location>
</feature>
<feature type="binding site" evidence="1">
    <location>
        <begin position="9"/>
        <end position="14"/>
    </location>
    <ligand>
        <name>FAD</name>
        <dbReference type="ChEBI" id="CHEBI:57692"/>
    </ligand>
</feature>
<sequence>MVHQIHVIGGGLAGSEAAWQLAQAGIRVRLSEMRGIEATPAHQTDSLAELVCSNSFRSDDPTNAVGLLHAEMRALGSLIMAKADAHRVPAGSALAVDREGYAEAVTHAVAGHPLIELVRERVDALPADGPVIVATGPLTAAALADSIGAATGADALAFFDAIAPIVHHHSIDMDVAWMASRWDKGETKDYINCPMDKDQYLAFHQALLDGEKTAFKEWEKDTPYFDGCMPIEVMAERGVDTMRYGPMKPVGLDNPRTGRWPYAVVQLRQDNALGTLWNMVGFQTKLKHAEQVRLFRTIPGLGKAEFARLGGLHRNTFIQSPKLLDGALRLKSRPNIRFAGQITGCEGYVESAAIGLLAGRFAAAELLGRPIETPPAATALGALLGHITGGAEADGYQPMNVNFGLFPPLEGAKGGRKRKGDRKAMMAERAGEALKAWMDGGVEPA</sequence>
<organism>
    <name type="scientific">Rhizorhabdus wittichii (strain DSM 6014 / CCUG 31198 / JCM 15750 / NBRC 105917 / EY 4224 / RW1)</name>
    <name type="common">Sphingomonas wittichii</name>
    <dbReference type="NCBI Taxonomy" id="392499"/>
    <lineage>
        <taxon>Bacteria</taxon>
        <taxon>Pseudomonadati</taxon>
        <taxon>Pseudomonadota</taxon>
        <taxon>Alphaproteobacteria</taxon>
        <taxon>Sphingomonadales</taxon>
        <taxon>Sphingomonadaceae</taxon>
        <taxon>Rhizorhabdus</taxon>
    </lineage>
</organism>
<proteinExistence type="inferred from homology"/>
<name>TRMFO_RHIWR</name>